<feature type="chain" id="PRO_0000070349" description="Macrodomain Ter protein">
    <location>
        <begin position="1"/>
        <end position="150"/>
    </location>
</feature>
<dbReference type="EMBL" id="AE014075">
    <property type="protein sequence ID" value="AAN79560.1"/>
    <property type="molecule type" value="Genomic_DNA"/>
</dbReference>
<dbReference type="RefSeq" id="WP_000877153.1">
    <property type="nucleotide sequence ID" value="NZ_CP051263.1"/>
</dbReference>
<dbReference type="SMR" id="Q8FJ81"/>
<dbReference type="STRING" id="199310.c1092"/>
<dbReference type="KEGG" id="ecc:c1092"/>
<dbReference type="eggNOG" id="COG3120">
    <property type="taxonomic scope" value="Bacteria"/>
</dbReference>
<dbReference type="HOGENOM" id="CLU_142157_0_0_6"/>
<dbReference type="BioCyc" id="ECOL199310:C1092-MONOMER"/>
<dbReference type="Proteomes" id="UP000001410">
    <property type="component" value="Chromosome"/>
</dbReference>
<dbReference type="GO" id="GO:0005737">
    <property type="term" value="C:cytoplasm"/>
    <property type="evidence" value="ECO:0007669"/>
    <property type="project" value="UniProtKB-SubCell"/>
</dbReference>
<dbReference type="GO" id="GO:0043565">
    <property type="term" value="F:sequence-specific DNA binding"/>
    <property type="evidence" value="ECO:0007669"/>
    <property type="project" value="UniProtKB-UniRule"/>
</dbReference>
<dbReference type="GO" id="GO:0051301">
    <property type="term" value="P:cell division"/>
    <property type="evidence" value="ECO:0007669"/>
    <property type="project" value="UniProtKB-UniRule"/>
</dbReference>
<dbReference type="GO" id="GO:0006355">
    <property type="term" value="P:regulation of DNA-templated transcription"/>
    <property type="evidence" value="ECO:0007669"/>
    <property type="project" value="InterPro"/>
</dbReference>
<dbReference type="FunFam" id="1.10.1220.10:FF:000004">
    <property type="entry name" value="Macrodomain Ter protein"/>
    <property type="match status" value="1"/>
</dbReference>
<dbReference type="FunFam" id="1.20.1270.380:FF:000001">
    <property type="entry name" value="Macrodomain Ter protein"/>
    <property type="match status" value="1"/>
</dbReference>
<dbReference type="Gene3D" id="1.20.1270.380">
    <property type="entry name" value="MatP, N-terminal domain"/>
    <property type="match status" value="1"/>
</dbReference>
<dbReference type="Gene3D" id="1.10.1220.10">
    <property type="entry name" value="Met repressor-like"/>
    <property type="match status" value="1"/>
</dbReference>
<dbReference type="HAMAP" id="MF_01073">
    <property type="entry name" value="MatP"/>
    <property type="match status" value="1"/>
</dbReference>
<dbReference type="InterPro" id="IPR013321">
    <property type="entry name" value="Arc_rbn_hlx_hlx"/>
</dbReference>
<dbReference type="InterPro" id="IPR009390">
    <property type="entry name" value="MatP"/>
</dbReference>
<dbReference type="InterPro" id="IPR035375">
    <property type="entry name" value="MatP_C"/>
</dbReference>
<dbReference type="InterPro" id="IPR035087">
    <property type="entry name" value="MatP_N"/>
</dbReference>
<dbReference type="InterPro" id="IPR038339">
    <property type="entry name" value="MatP_N_sf"/>
</dbReference>
<dbReference type="NCBIfam" id="NF003471">
    <property type="entry name" value="PRK05097.1"/>
    <property type="match status" value="1"/>
</dbReference>
<dbReference type="Pfam" id="PF06303">
    <property type="entry name" value="MatP"/>
    <property type="match status" value="1"/>
</dbReference>
<dbReference type="Pfam" id="PF17414">
    <property type="entry name" value="MatP_C"/>
    <property type="match status" value="1"/>
</dbReference>
<gene>
    <name evidence="1" type="primary">matP</name>
    <name type="ordered locus">c1092</name>
</gene>
<sequence length="150" mass="17723">MKYQQLENLESGWKWKYLVKKHREGELITRYIEASAAQEAVDELLSLENEPVLVNGWIDKHMNPELVNRMKQTIRARRKRHFNAEHQHTRKKSIDLEFIVWQRLAGLAQRRGKTLSETIVQLIEDAENKEKYANKMSSLKQDLQALLGKE</sequence>
<organism>
    <name type="scientific">Escherichia coli O6:H1 (strain CFT073 / ATCC 700928 / UPEC)</name>
    <dbReference type="NCBI Taxonomy" id="199310"/>
    <lineage>
        <taxon>Bacteria</taxon>
        <taxon>Pseudomonadati</taxon>
        <taxon>Pseudomonadota</taxon>
        <taxon>Gammaproteobacteria</taxon>
        <taxon>Enterobacterales</taxon>
        <taxon>Enterobacteriaceae</taxon>
        <taxon>Escherichia</taxon>
    </lineage>
</organism>
<comment type="function">
    <text evidence="1">Required for spatial organization of the terminus region of the chromosome (Ter macrodomain) during the cell cycle. Prevents early segregation of duplicated Ter macrodomains during cell division. Binds specifically to matS, which is a 13 bp signature motif repeated within the Ter macrodomain.</text>
</comment>
<comment type="subunit">
    <text evidence="1">Homodimer.</text>
</comment>
<comment type="subcellular location">
    <subcellularLocation>
        <location evidence="1">Cytoplasm</location>
    </subcellularLocation>
</comment>
<comment type="similarity">
    <text evidence="1">Belongs to the MatP family.</text>
</comment>
<evidence type="ECO:0000255" key="1">
    <source>
        <dbReference type="HAMAP-Rule" id="MF_01073"/>
    </source>
</evidence>
<protein>
    <recommendedName>
        <fullName evidence="1">Macrodomain Ter protein</fullName>
    </recommendedName>
</protein>
<name>MATP_ECOL6</name>
<keyword id="KW-0131">Cell cycle</keyword>
<keyword id="KW-0132">Cell division</keyword>
<keyword id="KW-0963">Cytoplasm</keyword>
<keyword id="KW-0238">DNA-binding</keyword>
<keyword id="KW-1185">Reference proteome</keyword>
<proteinExistence type="inferred from homology"/>
<reference key="1">
    <citation type="journal article" date="2002" name="Proc. Natl. Acad. Sci. U.S.A.">
        <title>Extensive mosaic structure revealed by the complete genome sequence of uropathogenic Escherichia coli.</title>
        <authorList>
            <person name="Welch R.A."/>
            <person name="Burland V."/>
            <person name="Plunkett G. III"/>
            <person name="Redford P."/>
            <person name="Roesch P."/>
            <person name="Rasko D."/>
            <person name="Buckles E.L."/>
            <person name="Liou S.-R."/>
            <person name="Boutin A."/>
            <person name="Hackett J."/>
            <person name="Stroud D."/>
            <person name="Mayhew G.F."/>
            <person name="Rose D.J."/>
            <person name="Zhou S."/>
            <person name="Schwartz D.C."/>
            <person name="Perna N.T."/>
            <person name="Mobley H.L.T."/>
            <person name="Donnenberg M.S."/>
            <person name="Blattner F.R."/>
        </authorList>
    </citation>
    <scope>NUCLEOTIDE SEQUENCE [LARGE SCALE GENOMIC DNA]</scope>
    <source>
        <strain>CFT073 / ATCC 700928 / UPEC</strain>
    </source>
</reference>
<accession>Q8FJ81</accession>